<sequence length="201" mass="22343">MGCSPSKEGNGSFSSTSTSFIHGSESHPEYDMLLKILVIGDSGVGKSCMLLRFADNRFTDSYISTIGVDFCIRTIELDGKKIKLQIWDTAGQERFKTITTSYYRGAHGLIIVYDITSMDSFNSIKRWLIDVDRFASPSVLKLIVGNKCDLNSKRAVDFKIAKKFADELNIPIMETSAKESTAIDEAFIKLASDIKKSTPQK</sequence>
<dbReference type="EMBL" id="AB015237">
    <property type="protein sequence ID" value="BAA31150.1"/>
    <property type="molecule type" value="mRNA"/>
</dbReference>
<dbReference type="EMBL" id="AAFI02000005">
    <property type="protein sequence ID" value="EAL71937.1"/>
    <property type="molecule type" value="Genomic_DNA"/>
</dbReference>
<dbReference type="RefSeq" id="XP_646027.1">
    <property type="nucleotide sequence ID" value="XM_640935.1"/>
</dbReference>
<dbReference type="SMR" id="O76173"/>
<dbReference type="FunCoup" id="O76173">
    <property type="interactions" value="8"/>
</dbReference>
<dbReference type="STRING" id="44689.O76173"/>
<dbReference type="PaxDb" id="44689-DDB0191203"/>
<dbReference type="EnsemblProtists" id="EAL71937">
    <property type="protein sequence ID" value="EAL71937"/>
    <property type="gene ID" value="DDB_G0269174"/>
</dbReference>
<dbReference type="GeneID" id="8616975"/>
<dbReference type="KEGG" id="ddi:DDB_G0269174"/>
<dbReference type="dictyBase" id="DDB_G0269174">
    <property type="gene designation" value="rab1C"/>
</dbReference>
<dbReference type="VEuPathDB" id="AmoebaDB:DDB_G0269174"/>
<dbReference type="eggNOG" id="KOG0084">
    <property type="taxonomic scope" value="Eukaryota"/>
</dbReference>
<dbReference type="HOGENOM" id="CLU_041217_23_1_1"/>
<dbReference type="InParanoid" id="O76173"/>
<dbReference type="OMA" id="AICEKMS"/>
<dbReference type="PhylomeDB" id="O76173"/>
<dbReference type="Reactome" id="R-DDI-6798695">
    <property type="pathway name" value="Neutrophil degranulation"/>
</dbReference>
<dbReference type="Reactome" id="R-DDI-6811438">
    <property type="pathway name" value="Intra-Golgi traffic"/>
</dbReference>
<dbReference type="Reactome" id="R-DDI-8854214">
    <property type="pathway name" value="TBC/RABGAPs"/>
</dbReference>
<dbReference type="Reactome" id="R-DDI-8873719">
    <property type="pathway name" value="RAB geranylgeranylation"/>
</dbReference>
<dbReference type="PRO" id="PR:O76173"/>
<dbReference type="Proteomes" id="UP000002195">
    <property type="component" value="Chromosome 1"/>
</dbReference>
<dbReference type="GO" id="GO:0005768">
    <property type="term" value="C:endosome"/>
    <property type="evidence" value="ECO:0000318"/>
    <property type="project" value="GO_Central"/>
</dbReference>
<dbReference type="GO" id="GO:0005794">
    <property type="term" value="C:Golgi apparatus"/>
    <property type="evidence" value="ECO:0000318"/>
    <property type="project" value="GO_Central"/>
</dbReference>
<dbReference type="GO" id="GO:0005811">
    <property type="term" value="C:lipid droplet"/>
    <property type="evidence" value="ECO:0007005"/>
    <property type="project" value="dictyBase"/>
</dbReference>
<dbReference type="GO" id="GO:0005525">
    <property type="term" value="F:GTP binding"/>
    <property type="evidence" value="ECO:0000318"/>
    <property type="project" value="GO_Central"/>
</dbReference>
<dbReference type="GO" id="GO:0003924">
    <property type="term" value="F:GTPase activity"/>
    <property type="evidence" value="ECO:0000318"/>
    <property type="project" value="GO_Central"/>
</dbReference>
<dbReference type="GO" id="GO:0006971">
    <property type="term" value="P:hypotonic response"/>
    <property type="evidence" value="ECO:0007007"/>
    <property type="project" value="dictyBase"/>
</dbReference>
<dbReference type="GO" id="GO:0009617">
    <property type="term" value="P:response to bacterium"/>
    <property type="evidence" value="ECO:0007007"/>
    <property type="project" value="dictyBase"/>
</dbReference>
<dbReference type="CDD" id="cd01869">
    <property type="entry name" value="Rab1_Ypt1"/>
    <property type="match status" value="1"/>
</dbReference>
<dbReference type="FunFam" id="3.40.50.300:FF:001447">
    <property type="entry name" value="Ras-related protein Rab-1B"/>
    <property type="match status" value="1"/>
</dbReference>
<dbReference type="Gene3D" id="3.40.50.300">
    <property type="entry name" value="P-loop containing nucleotide triphosphate hydrolases"/>
    <property type="match status" value="1"/>
</dbReference>
<dbReference type="InterPro" id="IPR027417">
    <property type="entry name" value="P-loop_NTPase"/>
</dbReference>
<dbReference type="InterPro" id="IPR005225">
    <property type="entry name" value="Small_GTP-bd"/>
</dbReference>
<dbReference type="InterPro" id="IPR001806">
    <property type="entry name" value="Small_GTPase"/>
</dbReference>
<dbReference type="InterPro" id="IPR050305">
    <property type="entry name" value="Small_GTPase_Rab"/>
</dbReference>
<dbReference type="NCBIfam" id="TIGR00231">
    <property type="entry name" value="small_GTP"/>
    <property type="match status" value="1"/>
</dbReference>
<dbReference type="PANTHER" id="PTHR47980">
    <property type="entry name" value="LD44762P"/>
    <property type="match status" value="1"/>
</dbReference>
<dbReference type="Pfam" id="PF00071">
    <property type="entry name" value="Ras"/>
    <property type="match status" value="1"/>
</dbReference>
<dbReference type="PRINTS" id="PR00449">
    <property type="entry name" value="RASTRNSFRMNG"/>
</dbReference>
<dbReference type="SMART" id="SM00177">
    <property type="entry name" value="ARF"/>
    <property type="match status" value="1"/>
</dbReference>
<dbReference type="SMART" id="SM00175">
    <property type="entry name" value="RAB"/>
    <property type="match status" value="1"/>
</dbReference>
<dbReference type="SMART" id="SM00176">
    <property type="entry name" value="RAN"/>
    <property type="match status" value="1"/>
</dbReference>
<dbReference type="SMART" id="SM00173">
    <property type="entry name" value="RAS"/>
    <property type="match status" value="1"/>
</dbReference>
<dbReference type="SMART" id="SM00174">
    <property type="entry name" value="RHO"/>
    <property type="match status" value="1"/>
</dbReference>
<dbReference type="SUPFAM" id="SSF52540">
    <property type="entry name" value="P-loop containing nucleoside triphosphate hydrolases"/>
    <property type="match status" value="1"/>
</dbReference>
<dbReference type="PROSITE" id="PS51419">
    <property type="entry name" value="RAB"/>
    <property type="match status" value="1"/>
</dbReference>
<accession>O76173</accession>
<accession>Q55DV4</accession>
<organism>
    <name type="scientific">Dictyostelium discoideum</name>
    <name type="common">Social amoeba</name>
    <dbReference type="NCBI Taxonomy" id="44689"/>
    <lineage>
        <taxon>Eukaryota</taxon>
        <taxon>Amoebozoa</taxon>
        <taxon>Evosea</taxon>
        <taxon>Eumycetozoa</taxon>
        <taxon>Dictyostelia</taxon>
        <taxon>Dictyosteliales</taxon>
        <taxon>Dictyosteliaceae</taxon>
        <taxon>Dictyostelium</taxon>
    </lineage>
</organism>
<protein>
    <recommendedName>
        <fullName>Ras-related protein Rab-1C</fullName>
    </recommendedName>
</protein>
<proteinExistence type="evidence at transcript level"/>
<comment type="PTM">
    <text>Although this sequence lacks the C-terminal cysteine motifs subject to isoprenylation in other Rab proteins, it does have N-terminal myristoylation and S-palmitoylation sequence motifs.</text>
</comment>
<comment type="similarity">
    <text evidence="5">Belongs to the small GTPase superfamily. Rab family.</text>
</comment>
<keyword id="KW-0342">GTP-binding</keyword>
<keyword id="KW-0449">Lipoprotein</keyword>
<keyword id="KW-0519">Myristate</keyword>
<keyword id="KW-0547">Nucleotide-binding</keyword>
<keyword id="KW-0564">Palmitate</keyword>
<keyword id="KW-1185">Reference proteome</keyword>
<gene>
    <name type="primary">Rab1C</name>
    <name type="ORF">DDB_G0269174</name>
</gene>
<reference key="1">
    <citation type="submission" date="1998-06" db="EMBL/GenBank/DDBJ databases">
        <title>Role of human Rab1-homologue in Dictyostelium development.</title>
        <authorList>
            <person name="Tanaka S."/>
            <person name="Morio T."/>
            <person name="Tanaka Y."/>
            <person name="Urushihara H."/>
            <person name="Ochiai H."/>
            <person name="Saito T."/>
            <person name="Yoshida M."/>
            <person name="Takeuchi I."/>
            <person name="Maeda M."/>
        </authorList>
    </citation>
    <scope>NUCLEOTIDE SEQUENCE [MRNA]</scope>
    <source>
        <strain>AX3-1</strain>
    </source>
</reference>
<reference key="2">
    <citation type="journal article" date="2005" name="Nature">
        <title>The genome of the social amoeba Dictyostelium discoideum.</title>
        <authorList>
            <person name="Eichinger L."/>
            <person name="Pachebat J.A."/>
            <person name="Gloeckner G."/>
            <person name="Rajandream M.A."/>
            <person name="Sucgang R."/>
            <person name="Berriman M."/>
            <person name="Song J."/>
            <person name="Olsen R."/>
            <person name="Szafranski K."/>
            <person name="Xu Q."/>
            <person name="Tunggal B."/>
            <person name="Kummerfeld S."/>
            <person name="Madera M."/>
            <person name="Konfortov B.A."/>
            <person name="Rivero F."/>
            <person name="Bankier A.T."/>
            <person name="Lehmann R."/>
            <person name="Hamlin N."/>
            <person name="Davies R."/>
            <person name="Gaudet P."/>
            <person name="Fey P."/>
            <person name="Pilcher K."/>
            <person name="Chen G."/>
            <person name="Saunders D."/>
            <person name="Sodergren E.J."/>
            <person name="Davis P."/>
            <person name="Kerhornou A."/>
            <person name="Nie X."/>
            <person name="Hall N."/>
            <person name="Anjard C."/>
            <person name="Hemphill L."/>
            <person name="Bason N."/>
            <person name="Farbrother P."/>
            <person name="Desany B."/>
            <person name="Just E."/>
            <person name="Morio T."/>
            <person name="Rost R."/>
            <person name="Churcher C.M."/>
            <person name="Cooper J."/>
            <person name="Haydock S."/>
            <person name="van Driessche N."/>
            <person name="Cronin A."/>
            <person name="Goodhead I."/>
            <person name="Muzny D.M."/>
            <person name="Mourier T."/>
            <person name="Pain A."/>
            <person name="Lu M."/>
            <person name="Harper D."/>
            <person name="Lindsay R."/>
            <person name="Hauser H."/>
            <person name="James K.D."/>
            <person name="Quiles M."/>
            <person name="Madan Babu M."/>
            <person name="Saito T."/>
            <person name="Buchrieser C."/>
            <person name="Wardroper A."/>
            <person name="Felder M."/>
            <person name="Thangavelu M."/>
            <person name="Johnson D."/>
            <person name="Knights A."/>
            <person name="Loulseged H."/>
            <person name="Mungall K.L."/>
            <person name="Oliver K."/>
            <person name="Price C."/>
            <person name="Quail M.A."/>
            <person name="Urushihara H."/>
            <person name="Hernandez J."/>
            <person name="Rabbinowitsch E."/>
            <person name="Steffen D."/>
            <person name="Sanders M."/>
            <person name="Ma J."/>
            <person name="Kohara Y."/>
            <person name="Sharp S."/>
            <person name="Simmonds M.N."/>
            <person name="Spiegler S."/>
            <person name="Tivey A."/>
            <person name="Sugano S."/>
            <person name="White B."/>
            <person name="Walker D."/>
            <person name="Woodward J.R."/>
            <person name="Winckler T."/>
            <person name="Tanaka Y."/>
            <person name="Shaulsky G."/>
            <person name="Schleicher M."/>
            <person name="Weinstock G.M."/>
            <person name="Rosenthal A."/>
            <person name="Cox E.C."/>
            <person name="Chisholm R.L."/>
            <person name="Gibbs R.A."/>
            <person name="Loomis W.F."/>
            <person name="Platzer M."/>
            <person name="Kay R.R."/>
            <person name="Williams J.G."/>
            <person name="Dear P.H."/>
            <person name="Noegel A.A."/>
            <person name="Barrell B.G."/>
            <person name="Kuspa A."/>
        </authorList>
    </citation>
    <scope>NUCLEOTIDE SEQUENCE [LARGE SCALE GENOMIC DNA]</scope>
    <source>
        <strain>AX4</strain>
    </source>
</reference>
<feature type="initiator methionine" description="Removed" evidence="3">
    <location>
        <position position="1"/>
    </location>
</feature>
<feature type="chain" id="PRO_0000332748" description="Ras-related protein Rab-1C">
    <location>
        <begin position="2"/>
        <end position="201"/>
    </location>
</feature>
<feature type="region of interest" description="Disordered" evidence="4">
    <location>
        <begin position="1"/>
        <end position="20"/>
    </location>
</feature>
<feature type="short sequence motif" description="Effector region" evidence="1">
    <location>
        <begin position="62"/>
        <end position="70"/>
    </location>
</feature>
<feature type="binding site" evidence="2">
    <location>
        <begin position="40"/>
        <end position="48"/>
    </location>
    <ligand>
        <name>GTP</name>
        <dbReference type="ChEBI" id="CHEBI:37565"/>
    </ligand>
</feature>
<feature type="binding site" evidence="2">
    <location>
        <begin position="58"/>
        <end position="65"/>
    </location>
    <ligand>
        <name>GTP</name>
        <dbReference type="ChEBI" id="CHEBI:37565"/>
    </ligand>
</feature>
<feature type="binding site" evidence="2">
    <location>
        <begin position="88"/>
        <end position="92"/>
    </location>
    <ligand>
        <name>GTP</name>
        <dbReference type="ChEBI" id="CHEBI:37565"/>
    </ligand>
</feature>
<feature type="binding site" evidence="2">
    <location>
        <begin position="146"/>
        <end position="149"/>
    </location>
    <ligand>
        <name>GTP</name>
        <dbReference type="ChEBI" id="CHEBI:37565"/>
    </ligand>
</feature>
<feature type="binding site" evidence="2">
    <location>
        <begin position="176"/>
        <end position="178"/>
    </location>
    <ligand>
        <name>GTP</name>
        <dbReference type="ChEBI" id="CHEBI:37565"/>
    </ligand>
</feature>
<feature type="lipid moiety-binding region" description="N-myristoyl glycine" evidence="3">
    <location>
        <position position="2"/>
    </location>
</feature>
<feature type="lipid moiety-binding region" description="S-palmitoyl cysteine" evidence="3">
    <location>
        <position position="3"/>
    </location>
</feature>
<name>RAB1C_DICDI</name>
<evidence type="ECO:0000250" key="1"/>
<evidence type="ECO:0000250" key="2">
    <source>
        <dbReference type="UniProtKB" id="P62820"/>
    </source>
</evidence>
<evidence type="ECO:0000255" key="3"/>
<evidence type="ECO:0000256" key="4">
    <source>
        <dbReference type="SAM" id="MobiDB-lite"/>
    </source>
</evidence>
<evidence type="ECO:0000305" key="5"/>